<name>FOLD_CHLTA</name>
<gene>
    <name evidence="1" type="primary">folD</name>
    <name type="ordered locus">CTA_0083</name>
</gene>
<reference key="1">
    <citation type="journal article" date="2005" name="Infect. Immun.">
        <title>Comparative genomic analysis of Chlamydia trachomatis oculotropic and genitotropic strains.</title>
        <authorList>
            <person name="Carlson J.H."/>
            <person name="Porcella S.F."/>
            <person name="McClarty G."/>
            <person name="Caldwell H.D."/>
        </authorList>
    </citation>
    <scope>NUCLEOTIDE SEQUENCE [LARGE SCALE GENOMIC DNA]</scope>
    <source>
        <strain>ATCC VR-571B / DSM 19440 / HAR-13</strain>
    </source>
</reference>
<organism>
    <name type="scientific">Chlamydia trachomatis serovar A (strain ATCC VR-571B / DSM 19440 / HAR-13)</name>
    <dbReference type="NCBI Taxonomy" id="315277"/>
    <lineage>
        <taxon>Bacteria</taxon>
        <taxon>Pseudomonadati</taxon>
        <taxon>Chlamydiota</taxon>
        <taxon>Chlamydiia</taxon>
        <taxon>Chlamydiales</taxon>
        <taxon>Chlamydiaceae</taxon>
        <taxon>Chlamydia/Chlamydophila group</taxon>
        <taxon>Chlamydia</taxon>
    </lineage>
</organism>
<dbReference type="EC" id="1.5.1.5" evidence="1"/>
<dbReference type="EC" id="3.5.4.9" evidence="1"/>
<dbReference type="EMBL" id="CP000051">
    <property type="protein sequence ID" value="AAX50329.1"/>
    <property type="molecule type" value="Genomic_DNA"/>
</dbReference>
<dbReference type="RefSeq" id="WP_009871427.1">
    <property type="nucleotide sequence ID" value="NC_007429.1"/>
</dbReference>
<dbReference type="SMR" id="Q3KMU3"/>
<dbReference type="KEGG" id="cta:CTA_0083"/>
<dbReference type="HOGENOM" id="CLU_034045_2_0_0"/>
<dbReference type="UniPathway" id="UPA00193"/>
<dbReference type="Proteomes" id="UP000002532">
    <property type="component" value="Chromosome"/>
</dbReference>
<dbReference type="GO" id="GO:0005829">
    <property type="term" value="C:cytosol"/>
    <property type="evidence" value="ECO:0007669"/>
    <property type="project" value="TreeGrafter"/>
</dbReference>
<dbReference type="GO" id="GO:0004477">
    <property type="term" value="F:methenyltetrahydrofolate cyclohydrolase activity"/>
    <property type="evidence" value="ECO:0007669"/>
    <property type="project" value="UniProtKB-UniRule"/>
</dbReference>
<dbReference type="GO" id="GO:0004488">
    <property type="term" value="F:methylenetetrahydrofolate dehydrogenase (NADP+) activity"/>
    <property type="evidence" value="ECO:0007669"/>
    <property type="project" value="UniProtKB-UniRule"/>
</dbReference>
<dbReference type="GO" id="GO:0000105">
    <property type="term" value="P:L-histidine biosynthetic process"/>
    <property type="evidence" value="ECO:0007669"/>
    <property type="project" value="UniProtKB-KW"/>
</dbReference>
<dbReference type="GO" id="GO:0009086">
    <property type="term" value="P:methionine biosynthetic process"/>
    <property type="evidence" value="ECO:0007669"/>
    <property type="project" value="UniProtKB-KW"/>
</dbReference>
<dbReference type="GO" id="GO:0006164">
    <property type="term" value="P:purine nucleotide biosynthetic process"/>
    <property type="evidence" value="ECO:0007669"/>
    <property type="project" value="UniProtKB-KW"/>
</dbReference>
<dbReference type="GO" id="GO:0035999">
    <property type="term" value="P:tetrahydrofolate interconversion"/>
    <property type="evidence" value="ECO:0007669"/>
    <property type="project" value="UniProtKB-UniRule"/>
</dbReference>
<dbReference type="CDD" id="cd01080">
    <property type="entry name" value="NAD_bind_m-THF_DH_Cyclohyd"/>
    <property type="match status" value="1"/>
</dbReference>
<dbReference type="FunFam" id="3.40.50.720:FF:000094">
    <property type="entry name" value="Bifunctional protein FolD"/>
    <property type="match status" value="1"/>
</dbReference>
<dbReference type="FunFam" id="3.40.50.10860:FF:000005">
    <property type="entry name" value="C-1-tetrahydrofolate synthase, cytoplasmic, putative"/>
    <property type="match status" value="1"/>
</dbReference>
<dbReference type="Gene3D" id="3.40.50.10860">
    <property type="entry name" value="Leucine Dehydrogenase, chain A, domain 1"/>
    <property type="match status" value="1"/>
</dbReference>
<dbReference type="Gene3D" id="3.40.50.720">
    <property type="entry name" value="NAD(P)-binding Rossmann-like Domain"/>
    <property type="match status" value="1"/>
</dbReference>
<dbReference type="HAMAP" id="MF_01576">
    <property type="entry name" value="THF_DHG_CYH"/>
    <property type="match status" value="1"/>
</dbReference>
<dbReference type="InterPro" id="IPR046346">
    <property type="entry name" value="Aminoacid_DH-like_N_sf"/>
</dbReference>
<dbReference type="InterPro" id="IPR036291">
    <property type="entry name" value="NAD(P)-bd_dom_sf"/>
</dbReference>
<dbReference type="InterPro" id="IPR000672">
    <property type="entry name" value="THF_DH/CycHdrlase"/>
</dbReference>
<dbReference type="InterPro" id="IPR020630">
    <property type="entry name" value="THF_DH/CycHdrlase_cat_dom"/>
</dbReference>
<dbReference type="InterPro" id="IPR020867">
    <property type="entry name" value="THF_DH/CycHdrlase_CS"/>
</dbReference>
<dbReference type="InterPro" id="IPR020631">
    <property type="entry name" value="THF_DH/CycHdrlase_NAD-bd_dom"/>
</dbReference>
<dbReference type="NCBIfam" id="NF010778">
    <property type="entry name" value="PRK14181.1"/>
    <property type="match status" value="1"/>
</dbReference>
<dbReference type="PANTHER" id="PTHR48099:SF5">
    <property type="entry name" value="C-1-TETRAHYDROFOLATE SYNTHASE, CYTOPLASMIC"/>
    <property type="match status" value="1"/>
</dbReference>
<dbReference type="PANTHER" id="PTHR48099">
    <property type="entry name" value="C-1-TETRAHYDROFOLATE SYNTHASE, CYTOPLASMIC-RELATED"/>
    <property type="match status" value="1"/>
</dbReference>
<dbReference type="Pfam" id="PF00763">
    <property type="entry name" value="THF_DHG_CYH"/>
    <property type="match status" value="1"/>
</dbReference>
<dbReference type="Pfam" id="PF02882">
    <property type="entry name" value="THF_DHG_CYH_C"/>
    <property type="match status" value="1"/>
</dbReference>
<dbReference type="PRINTS" id="PR00085">
    <property type="entry name" value="THFDHDRGNASE"/>
</dbReference>
<dbReference type="SUPFAM" id="SSF53223">
    <property type="entry name" value="Aminoacid dehydrogenase-like, N-terminal domain"/>
    <property type="match status" value="1"/>
</dbReference>
<dbReference type="SUPFAM" id="SSF51735">
    <property type="entry name" value="NAD(P)-binding Rossmann-fold domains"/>
    <property type="match status" value="1"/>
</dbReference>
<dbReference type="PROSITE" id="PS00766">
    <property type="entry name" value="THF_DHG_CYH_1"/>
    <property type="match status" value="1"/>
</dbReference>
<dbReference type="PROSITE" id="PS00767">
    <property type="entry name" value="THF_DHG_CYH_2"/>
    <property type="match status" value="1"/>
</dbReference>
<evidence type="ECO:0000255" key="1">
    <source>
        <dbReference type="HAMAP-Rule" id="MF_01576"/>
    </source>
</evidence>
<comment type="function">
    <text evidence="1">Catalyzes the oxidation of 5,10-methylenetetrahydrofolate to 5,10-methenyltetrahydrofolate and then the hydrolysis of 5,10-methenyltetrahydrofolate to 10-formyltetrahydrofolate.</text>
</comment>
<comment type="catalytic activity">
    <reaction evidence="1">
        <text>(6R)-5,10-methylene-5,6,7,8-tetrahydrofolate + NADP(+) = (6R)-5,10-methenyltetrahydrofolate + NADPH</text>
        <dbReference type="Rhea" id="RHEA:22812"/>
        <dbReference type="ChEBI" id="CHEBI:15636"/>
        <dbReference type="ChEBI" id="CHEBI:57455"/>
        <dbReference type="ChEBI" id="CHEBI:57783"/>
        <dbReference type="ChEBI" id="CHEBI:58349"/>
        <dbReference type="EC" id="1.5.1.5"/>
    </reaction>
</comment>
<comment type="catalytic activity">
    <reaction evidence="1">
        <text>(6R)-5,10-methenyltetrahydrofolate + H2O = (6R)-10-formyltetrahydrofolate + H(+)</text>
        <dbReference type="Rhea" id="RHEA:23700"/>
        <dbReference type="ChEBI" id="CHEBI:15377"/>
        <dbReference type="ChEBI" id="CHEBI:15378"/>
        <dbReference type="ChEBI" id="CHEBI:57455"/>
        <dbReference type="ChEBI" id="CHEBI:195366"/>
        <dbReference type="EC" id="3.5.4.9"/>
    </reaction>
</comment>
<comment type="pathway">
    <text evidence="1">One-carbon metabolism; tetrahydrofolate interconversion.</text>
</comment>
<comment type="subunit">
    <text evidence="1">Homodimer.</text>
</comment>
<comment type="similarity">
    <text evidence="1">Belongs to the tetrahydrofolate dehydrogenase/cyclohydrolase family.</text>
</comment>
<sequence length="287" mass="30866">MLLKGAPAADHILATIKENIRACSKAPGLAVVLIGNNPASEIYVNMKIKRATDLGMVSKSYRKPSDATLSDILALIHQLNNDENIHGILVQLPLPKHLDAQAILSTITPDKDVDGLHPVNVGKLLLGETDGFIPCTPAGIVELCKYYEIPLHGKHVVILGRSNIVGKPLAALLMQRHADTNASVTLLHSQSEHLTEITRTADILISAIGVPLFVNKEMIAEKTVIMDVGTSRIPAANPKGYILVGDVDFNNVVPVCRAITPVPGGVGPMTVAMLMRNTWESFLRHTS</sequence>
<protein>
    <recommendedName>
        <fullName evidence="1">Bifunctional protein FolD</fullName>
    </recommendedName>
    <domain>
        <recommendedName>
            <fullName evidence="1">Methylenetetrahydrofolate dehydrogenase</fullName>
            <ecNumber evidence="1">1.5.1.5</ecNumber>
        </recommendedName>
    </domain>
    <domain>
        <recommendedName>
            <fullName evidence="1">Methenyltetrahydrofolate cyclohydrolase</fullName>
            <ecNumber evidence="1">3.5.4.9</ecNumber>
        </recommendedName>
    </domain>
</protein>
<proteinExistence type="inferred from homology"/>
<accession>Q3KMU3</accession>
<feature type="chain" id="PRO_0000268308" description="Bifunctional protein FolD">
    <location>
        <begin position="1"/>
        <end position="287"/>
    </location>
</feature>
<feature type="binding site" evidence="1">
    <location>
        <begin position="160"/>
        <end position="162"/>
    </location>
    <ligand>
        <name>NADP(+)</name>
        <dbReference type="ChEBI" id="CHEBI:58349"/>
    </ligand>
</feature>
<feature type="binding site" evidence="1">
    <location>
        <position position="189"/>
    </location>
    <ligand>
        <name>NADP(+)</name>
        <dbReference type="ChEBI" id="CHEBI:58349"/>
    </ligand>
</feature>
<feature type="binding site" evidence="1">
    <location>
        <position position="230"/>
    </location>
    <ligand>
        <name>NADP(+)</name>
        <dbReference type="ChEBI" id="CHEBI:58349"/>
    </ligand>
</feature>
<keyword id="KW-0028">Amino-acid biosynthesis</keyword>
<keyword id="KW-0368">Histidine biosynthesis</keyword>
<keyword id="KW-0378">Hydrolase</keyword>
<keyword id="KW-0486">Methionine biosynthesis</keyword>
<keyword id="KW-0511">Multifunctional enzyme</keyword>
<keyword id="KW-0521">NADP</keyword>
<keyword id="KW-0554">One-carbon metabolism</keyword>
<keyword id="KW-0560">Oxidoreductase</keyword>
<keyword id="KW-0658">Purine biosynthesis</keyword>